<keyword id="KW-1185">Reference proteome</keyword>
<protein>
    <recommendedName>
        <fullName evidence="1">Inactive palmitoleoyl-protein carboxylesterase notum1b</fullName>
    </recommendedName>
</protein>
<accession>Q6DFZ6</accession>
<name>NOT1B_DANRE</name>
<gene>
    <name evidence="4" type="primary">notum1b</name>
    <name evidence="2" type="ORF">zgc:92474</name>
</gene>
<reference key="1">
    <citation type="journal article" date="2013" name="Nature">
        <title>The zebrafish reference genome sequence and its relationship to the human genome.</title>
        <authorList>
            <person name="Howe K."/>
            <person name="Clark M.D."/>
            <person name="Torroja C.F."/>
            <person name="Torrance J."/>
            <person name="Berthelot C."/>
            <person name="Muffato M."/>
            <person name="Collins J.E."/>
            <person name="Humphray S."/>
            <person name="McLaren K."/>
            <person name="Matthews L."/>
            <person name="McLaren S."/>
            <person name="Sealy I."/>
            <person name="Caccamo M."/>
            <person name="Churcher C."/>
            <person name="Scott C."/>
            <person name="Barrett J.C."/>
            <person name="Koch R."/>
            <person name="Rauch G.J."/>
            <person name="White S."/>
            <person name="Chow W."/>
            <person name="Kilian B."/>
            <person name="Quintais L.T."/>
            <person name="Guerra-Assuncao J.A."/>
            <person name="Zhou Y."/>
            <person name="Gu Y."/>
            <person name="Yen J."/>
            <person name="Vogel J.H."/>
            <person name="Eyre T."/>
            <person name="Redmond S."/>
            <person name="Banerjee R."/>
            <person name="Chi J."/>
            <person name="Fu B."/>
            <person name="Langley E."/>
            <person name="Maguire S.F."/>
            <person name="Laird G.K."/>
            <person name="Lloyd D."/>
            <person name="Kenyon E."/>
            <person name="Donaldson S."/>
            <person name="Sehra H."/>
            <person name="Almeida-King J."/>
            <person name="Loveland J."/>
            <person name="Trevanion S."/>
            <person name="Jones M."/>
            <person name="Quail M."/>
            <person name="Willey D."/>
            <person name="Hunt A."/>
            <person name="Burton J."/>
            <person name="Sims S."/>
            <person name="McLay K."/>
            <person name="Plumb B."/>
            <person name="Davis J."/>
            <person name="Clee C."/>
            <person name="Oliver K."/>
            <person name="Clark R."/>
            <person name="Riddle C."/>
            <person name="Elliot D."/>
            <person name="Threadgold G."/>
            <person name="Harden G."/>
            <person name="Ware D."/>
            <person name="Begum S."/>
            <person name="Mortimore B."/>
            <person name="Kerry G."/>
            <person name="Heath P."/>
            <person name="Phillimore B."/>
            <person name="Tracey A."/>
            <person name="Corby N."/>
            <person name="Dunn M."/>
            <person name="Johnson C."/>
            <person name="Wood J."/>
            <person name="Clark S."/>
            <person name="Pelan S."/>
            <person name="Griffiths G."/>
            <person name="Smith M."/>
            <person name="Glithero R."/>
            <person name="Howden P."/>
            <person name="Barker N."/>
            <person name="Lloyd C."/>
            <person name="Stevens C."/>
            <person name="Harley J."/>
            <person name="Holt K."/>
            <person name="Panagiotidis G."/>
            <person name="Lovell J."/>
            <person name="Beasley H."/>
            <person name="Henderson C."/>
            <person name="Gordon D."/>
            <person name="Auger K."/>
            <person name="Wright D."/>
            <person name="Collins J."/>
            <person name="Raisen C."/>
            <person name="Dyer L."/>
            <person name="Leung K."/>
            <person name="Robertson L."/>
            <person name="Ambridge K."/>
            <person name="Leongamornlert D."/>
            <person name="McGuire S."/>
            <person name="Gilderthorp R."/>
            <person name="Griffiths C."/>
            <person name="Manthravadi D."/>
            <person name="Nichol S."/>
            <person name="Barker G."/>
            <person name="Whitehead S."/>
            <person name="Kay M."/>
            <person name="Brown J."/>
            <person name="Murnane C."/>
            <person name="Gray E."/>
            <person name="Humphries M."/>
            <person name="Sycamore N."/>
            <person name="Barker D."/>
            <person name="Saunders D."/>
            <person name="Wallis J."/>
            <person name="Babbage A."/>
            <person name="Hammond S."/>
            <person name="Mashreghi-Mohammadi M."/>
            <person name="Barr L."/>
            <person name="Martin S."/>
            <person name="Wray P."/>
            <person name="Ellington A."/>
            <person name="Matthews N."/>
            <person name="Ellwood M."/>
            <person name="Woodmansey R."/>
            <person name="Clark G."/>
            <person name="Cooper J."/>
            <person name="Tromans A."/>
            <person name="Grafham D."/>
            <person name="Skuce C."/>
            <person name="Pandian R."/>
            <person name="Andrews R."/>
            <person name="Harrison E."/>
            <person name="Kimberley A."/>
            <person name="Garnett J."/>
            <person name="Fosker N."/>
            <person name="Hall R."/>
            <person name="Garner P."/>
            <person name="Kelly D."/>
            <person name="Bird C."/>
            <person name="Palmer S."/>
            <person name="Gehring I."/>
            <person name="Berger A."/>
            <person name="Dooley C.M."/>
            <person name="Ersan-Urun Z."/>
            <person name="Eser C."/>
            <person name="Geiger H."/>
            <person name="Geisler M."/>
            <person name="Karotki L."/>
            <person name="Kirn A."/>
            <person name="Konantz J."/>
            <person name="Konantz M."/>
            <person name="Oberlander M."/>
            <person name="Rudolph-Geiger S."/>
            <person name="Teucke M."/>
            <person name="Lanz C."/>
            <person name="Raddatz G."/>
            <person name="Osoegawa K."/>
            <person name="Zhu B."/>
            <person name="Rapp A."/>
            <person name="Widaa S."/>
            <person name="Langford C."/>
            <person name="Yang F."/>
            <person name="Schuster S.C."/>
            <person name="Carter N.P."/>
            <person name="Harrow J."/>
            <person name="Ning Z."/>
            <person name="Herrero J."/>
            <person name="Searle S.M."/>
            <person name="Enright A."/>
            <person name="Geisler R."/>
            <person name="Plasterk R.H."/>
            <person name="Lee C."/>
            <person name="Westerfield M."/>
            <person name="de Jong P.J."/>
            <person name="Zon L.I."/>
            <person name="Postlethwait J.H."/>
            <person name="Nusslein-Volhard C."/>
            <person name="Hubbard T.J."/>
            <person name="Roest Crollius H."/>
            <person name="Rogers J."/>
            <person name="Stemple D.L."/>
        </authorList>
    </citation>
    <scope>NUCLEOTIDE SEQUENCE [LARGE SCALE GENOMIC DNA]</scope>
    <source>
        <strain>Tuebingen</strain>
    </source>
</reference>
<reference key="2">
    <citation type="submission" date="2004-07" db="EMBL/GenBank/DDBJ databases">
        <authorList>
            <consortium name="NIH - Zebrafish Gene Collection (ZGC) project"/>
        </authorList>
    </citation>
    <scope>NUCLEOTIDE SEQUENCE [LARGE SCALE MRNA]</scope>
</reference>
<comment type="function">
    <text evidence="3">Probable inactive palmitoleoyl-protein carboxylesterase.</text>
</comment>
<comment type="similarity">
    <text evidence="3">Belongs to the pectinacetylesterase family. Notum subfamily.</text>
</comment>
<comment type="caution">
    <text>In contrast to other members of the family, lacks the active sites for palmitoleoyl-protein carboxylesterase activity, suggesting it has no activity.</text>
</comment>
<organism>
    <name type="scientific">Danio rerio</name>
    <name type="common">Zebrafish</name>
    <name type="synonym">Brachydanio rerio</name>
    <dbReference type="NCBI Taxonomy" id="7955"/>
    <lineage>
        <taxon>Eukaryota</taxon>
        <taxon>Metazoa</taxon>
        <taxon>Chordata</taxon>
        <taxon>Craniata</taxon>
        <taxon>Vertebrata</taxon>
        <taxon>Euteleostomi</taxon>
        <taxon>Actinopterygii</taxon>
        <taxon>Neopterygii</taxon>
        <taxon>Teleostei</taxon>
        <taxon>Ostariophysi</taxon>
        <taxon>Cypriniformes</taxon>
        <taxon>Danionidae</taxon>
        <taxon>Danioninae</taxon>
        <taxon>Danio</taxon>
    </lineage>
</organism>
<sequence>MAQVKSLAQSLYPCSSQRLEHQMKLQILKNSSVTCNDGTPAGYYIKESRGSRRWLVFLEGGWYCFSKHTCDSRYESMRRLMSSSNWPPTRTGTGILSPQPEENPHWWNANTVFVPYCSSDVWSGSTPKTDQRGHQGALN</sequence>
<feature type="chain" id="PRO_0000432992" description="Inactive palmitoleoyl-protein carboxylesterase notum1b">
    <location>
        <begin position="1"/>
        <end position="139"/>
    </location>
</feature>
<proteinExistence type="evidence at transcript level"/>
<evidence type="ECO:0000250" key="1">
    <source>
        <dbReference type="UniProtKB" id="Q6P988"/>
    </source>
</evidence>
<evidence type="ECO:0000303" key="2">
    <source ref="2"/>
</evidence>
<evidence type="ECO:0000305" key="3"/>
<evidence type="ECO:0000312" key="4">
    <source>
        <dbReference type="ZFIN" id="ZDB-GENE-040718-391"/>
    </source>
</evidence>
<dbReference type="EMBL" id="CABZ01094849">
    <property type="status" value="NOT_ANNOTATED_CDS"/>
    <property type="molecule type" value="Genomic_DNA"/>
</dbReference>
<dbReference type="EMBL" id="BC076559">
    <property type="protein sequence ID" value="AAH76559.1"/>
    <property type="molecule type" value="mRNA"/>
</dbReference>
<dbReference type="RefSeq" id="NP_001002644.1">
    <property type="nucleotide sequence ID" value="NM_001002644.1"/>
</dbReference>
<dbReference type="SMR" id="Q6DFZ6"/>
<dbReference type="AGR" id="ZFIN:ZDB-GENE-040718-391"/>
<dbReference type="ZFIN" id="ZDB-GENE-040718-391">
    <property type="gene designation" value="notum1b"/>
</dbReference>
<dbReference type="eggNOG" id="KOG4287">
    <property type="taxonomic scope" value="Eukaryota"/>
</dbReference>
<dbReference type="InParanoid" id="Q6DFZ6"/>
<dbReference type="OrthoDB" id="2015280at2759"/>
<dbReference type="PhylomeDB" id="Q6DFZ6"/>
<dbReference type="PRO" id="PR:Q6DFZ6"/>
<dbReference type="Proteomes" id="UP000000437">
    <property type="component" value="Chromosome 11"/>
</dbReference>
<dbReference type="GO" id="GO:1990699">
    <property type="term" value="F:palmitoleyl hydrolase activity"/>
    <property type="evidence" value="ECO:0000250"/>
    <property type="project" value="UniProtKB"/>
</dbReference>
<dbReference type="GO" id="GO:0030178">
    <property type="term" value="P:negative regulation of Wnt signaling pathway"/>
    <property type="evidence" value="ECO:0000250"/>
    <property type="project" value="UniProtKB"/>
</dbReference>
<dbReference type="GO" id="GO:1990697">
    <property type="term" value="P:protein depalmitoleylation"/>
    <property type="evidence" value="ECO:0000250"/>
    <property type="project" value="UniProtKB"/>
</dbReference>
<dbReference type="InterPro" id="IPR004963">
    <property type="entry name" value="PAE/NOTUM"/>
</dbReference>
<dbReference type="PANTHER" id="PTHR21562">
    <property type="entry name" value="NOTUM-RELATED"/>
    <property type="match status" value="1"/>
</dbReference>
<dbReference type="PANTHER" id="PTHR21562:SF7">
    <property type="entry name" value="PALMITOLEOYL-PROTEIN CARBOXYLESTERASE NOTUM"/>
    <property type="match status" value="1"/>
</dbReference>
<dbReference type="Pfam" id="PF03283">
    <property type="entry name" value="PAE"/>
    <property type="match status" value="1"/>
</dbReference>